<comment type="subcellular location">
    <subcellularLocation>
        <location evidence="1">Cell membrane</location>
        <topology evidence="1">Single-pass membrane protein</topology>
    </subcellularLocation>
</comment>
<comment type="similarity">
    <text evidence="1">Belongs to the UPF0370 family.</text>
</comment>
<sequence length="66" mass="8099">MDWLAKYWWILVLVFLVGVLLNVIKDLKRIDHKKFLANKPELPPHRDFNDKWDDEDDWPKKDQPKK</sequence>
<dbReference type="EMBL" id="AE006468">
    <property type="protein sequence ID" value="AAL21378.1"/>
    <property type="molecule type" value="Genomic_DNA"/>
</dbReference>
<dbReference type="RefSeq" id="NP_461419.1">
    <property type="nucleotide sequence ID" value="NC_003197.2"/>
</dbReference>
<dbReference type="RefSeq" id="WP_000383839.1">
    <property type="nucleotide sequence ID" value="NC_003197.2"/>
</dbReference>
<dbReference type="SMR" id="Q7CQ24"/>
<dbReference type="STRING" id="99287.STM2484"/>
<dbReference type="PaxDb" id="99287-STM2484"/>
<dbReference type="GeneID" id="1254006"/>
<dbReference type="KEGG" id="stm:STM2484"/>
<dbReference type="PATRIC" id="fig|99287.12.peg.2622"/>
<dbReference type="HOGENOM" id="CLU_198936_0_0_6"/>
<dbReference type="OMA" id="DDWPQKK"/>
<dbReference type="PhylomeDB" id="Q7CQ24"/>
<dbReference type="BioCyc" id="SENT99287:STM2484-MONOMER"/>
<dbReference type="Proteomes" id="UP000001014">
    <property type="component" value="Chromosome"/>
</dbReference>
<dbReference type="GO" id="GO:0005886">
    <property type="term" value="C:plasma membrane"/>
    <property type="evidence" value="ECO:0007669"/>
    <property type="project" value="UniProtKB-SubCell"/>
</dbReference>
<dbReference type="HAMAP" id="MF_01566">
    <property type="entry name" value="UPF0370"/>
    <property type="match status" value="1"/>
</dbReference>
<dbReference type="InterPro" id="IPR020910">
    <property type="entry name" value="UPF0370"/>
</dbReference>
<dbReference type="NCBIfam" id="NF010185">
    <property type="entry name" value="PRK13664.1"/>
    <property type="match status" value="1"/>
</dbReference>
<dbReference type="Pfam" id="PF13980">
    <property type="entry name" value="UPF0370"/>
    <property type="match status" value="1"/>
</dbReference>
<name>YPFN_SALTY</name>
<accession>Q7CQ24</accession>
<keyword id="KW-1003">Cell membrane</keyword>
<keyword id="KW-0472">Membrane</keyword>
<keyword id="KW-1185">Reference proteome</keyword>
<keyword id="KW-0812">Transmembrane</keyword>
<keyword id="KW-1133">Transmembrane helix</keyword>
<reference key="1">
    <citation type="journal article" date="2001" name="Nature">
        <title>Complete genome sequence of Salmonella enterica serovar Typhimurium LT2.</title>
        <authorList>
            <person name="McClelland M."/>
            <person name="Sanderson K.E."/>
            <person name="Spieth J."/>
            <person name="Clifton S.W."/>
            <person name="Latreille P."/>
            <person name="Courtney L."/>
            <person name="Porwollik S."/>
            <person name="Ali J."/>
            <person name="Dante M."/>
            <person name="Du F."/>
            <person name="Hou S."/>
            <person name="Layman D."/>
            <person name="Leonard S."/>
            <person name="Nguyen C."/>
            <person name="Scott K."/>
            <person name="Holmes A."/>
            <person name="Grewal N."/>
            <person name="Mulvaney E."/>
            <person name="Ryan E."/>
            <person name="Sun H."/>
            <person name="Florea L."/>
            <person name="Miller W."/>
            <person name="Stoneking T."/>
            <person name="Nhan M."/>
            <person name="Waterston R."/>
            <person name="Wilson R.K."/>
        </authorList>
    </citation>
    <scope>NUCLEOTIDE SEQUENCE [LARGE SCALE GENOMIC DNA]</scope>
    <source>
        <strain>LT2 / SGSC1412 / ATCC 700720</strain>
    </source>
</reference>
<protein>
    <recommendedName>
        <fullName evidence="1">UPF0370 protein YpfN</fullName>
    </recommendedName>
</protein>
<feature type="chain" id="PRO_0000244549" description="UPF0370 protein YpfN">
    <location>
        <begin position="1"/>
        <end position="66"/>
    </location>
</feature>
<feature type="transmembrane region" description="Helical" evidence="1">
    <location>
        <begin position="4"/>
        <end position="24"/>
    </location>
</feature>
<feature type="region of interest" description="Disordered" evidence="2">
    <location>
        <begin position="39"/>
        <end position="66"/>
    </location>
</feature>
<feature type="compositionally biased region" description="Basic and acidic residues" evidence="2">
    <location>
        <begin position="42"/>
        <end position="51"/>
    </location>
</feature>
<organism>
    <name type="scientific">Salmonella typhimurium (strain LT2 / SGSC1412 / ATCC 700720)</name>
    <dbReference type="NCBI Taxonomy" id="99287"/>
    <lineage>
        <taxon>Bacteria</taxon>
        <taxon>Pseudomonadati</taxon>
        <taxon>Pseudomonadota</taxon>
        <taxon>Gammaproteobacteria</taxon>
        <taxon>Enterobacterales</taxon>
        <taxon>Enterobacteriaceae</taxon>
        <taxon>Salmonella</taxon>
    </lineage>
</organism>
<gene>
    <name evidence="1" type="primary">ypfN</name>
    <name type="ordered locus">STM2484</name>
</gene>
<evidence type="ECO:0000255" key="1">
    <source>
        <dbReference type="HAMAP-Rule" id="MF_01566"/>
    </source>
</evidence>
<evidence type="ECO:0000256" key="2">
    <source>
        <dbReference type="SAM" id="MobiDB-lite"/>
    </source>
</evidence>
<proteinExistence type="inferred from homology"/>